<proteinExistence type="evidence at transcript level"/>
<sequence length="73" mass="7918">IGMAVECKDGYLVGADGCKYGCFTRPGHFCASECSLLKGKDGYCYAWLACYCYNLPDSVPVWDSATNRCGKGK</sequence>
<name>SCX7_TITDI</name>
<reference key="1">
    <citation type="journal article" date="2006" name="Comp. Biochem. Physiol.">
        <title>Diversity of long-chain toxins in Tityus zulianus and Tityus discrepans venoms (Scorpiones, Buthidae): molecular, immunological, and mass spectral analyses.</title>
        <authorList>
            <person name="Borges A."/>
            <person name="Garcia C.C."/>
            <person name="Lugo E."/>
            <person name="Alfonzo M.J."/>
            <person name="Jowers M.J."/>
            <person name="Op den Camp H.J.M."/>
        </authorList>
    </citation>
    <scope>NUCLEOTIDE SEQUENCE [MRNA]</scope>
    <source>
        <tissue>Venom gland</tissue>
    </source>
</reference>
<reference key="2">
    <citation type="journal article" date="2012" name="PLoS ONE">
        <title>Identification and phylogenetic analysis of Tityus pachyurus and Tityus obscurus novel putative Na+-channel scorpion toxins.</title>
        <authorList>
            <person name="Guerrero-Vargas J.A."/>
            <person name="Mourao C.B."/>
            <person name="Quintero-Hernandez V."/>
            <person name="Possani L.D."/>
            <person name="Schwartz E.F."/>
        </authorList>
    </citation>
    <scope>NOMENCLATURE</scope>
</reference>
<keyword id="KW-0027">Amidation</keyword>
<keyword id="KW-1015">Disulfide bond</keyword>
<keyword id="KW-0872">Ion channel impairing toxin</keyword>
<keyword id="KW-0528">Neurotoxin</keyword>
<keyword id="KW-0964">Secreted</keyword>
<keyword id="KW-0732">Signal</keyword>
<keyword id="KW-0800">Toxin</keyword>
<keyword id="KW-0738">Voltage-gated sodium channel impairing toxin</keyword>
<evidence type="ECO:0000250" key="1"/>
<evidence type="ECO:0000255" key="2">
    <source>
        <dbReference type="PROSITE-ProRule" id="PRU01210"/>
    </source>
</evidence>
<evidence type="ECO:0000305" key="3"/>
<organism>
    <name type="scientific">Tityus discrepans</name>
    <name type="common">Venezuelan scorpion</name>
    <dbReference type="NCBI Taxonomy" id="57059"/>
    <lineage>
        <taxon>Eukaryota</taxon>
        <taxon>Metazoa</taxon>
        <taxon>Ecdysozoa</taxon>
        <taxon>Arthropoda</taxon>
        <taxon>Chelicerata</taxon>
        <taxon>Arachnida</taxon>
        <taxon>Scorpiones</taxon>
        <taxon>Buthida</taxon>
        <taxon>Buthoidea</taxon>
        <taxon>Buthidae</taxon>
        <taxon>Tityus</taxon>
    </lineage>
</organism>
<feature type="signal peptide" evidence="1">
    <location>
        <begin position="1" status="less than"/>
        <end position="7"/>
    </location>
</feature>
<feature type="chain" id="PRO_0000253770" description="Toxin Td7">
    <location>
        <begin position="8"/>
        <end position="71"/>
    </location>
</feature>
<feature type="domain" description="LCN-type CS-alpha/beta" evidence="2">
    <location>
        <begin position="8"/>
        <end position="70"/>
    </location>
</feature>
<feature type="modified residue" description="Lysine amide" evidence="1">
    <location>
        <position position="71"/>
    </location>
</feature>
<feature type="disulfide bond" evidence="2">
    <location>
        <begin position="18"/>
        <end position="69"/>
    </location>
</feature>
<feature type="disulfide bond" evidence="2">
    <location>
        <begin position="22"/>
        <end position="44"/>
    </location>
</feature>
<feature type="disulfide bond" evidence="2">
    <location>
        <begin position="30"/>
        <end position="50"/>
    </location>
</feature>
<feature type="disulfide bond" evidence="2">
    <location>
        <begin position="34"/>
        <end position="52"/>
    </location>
</feature>
<feature type="non-terminal residue">
    <location>
        <position position="1"/>
    </location>
</feature>
<accession>Q1I164</accession>
<protein>
    <recommendedName>
        <fullName>Toxin Td7</fullName>
    </recommendedName>
    <alternativeName>
        <fullName>T-beta* NaTx14.4</fullName>
    </alternativeName>
</protein>
<dbReference type="EMBL" id="DQ075242">
    <property type="protein sequence ID" value="AAZ29721.1"/>
    <property type="molecule type" value="mRNA"/>
</dbReference>
<dbReference type="SMR" id="Q1I164"/>
<dbReference type="GO" id="GO:0005576">
    <property type="term" value="C:extracellular region"/>
    <property type="evidence" value="ECO:0007669"/>
    <property type="project" value="UniProtKB-SubCell"/>
</dbReference>
<dbReference type="GO" id="GO:0019871">
    <property type="term" value="F:sodium channel inhibitor activity"/>
    <property type="evidence" value="ECO:0007669"/>
    <property type="project" value="InterPro"/>
</dbReference>
<dbReference type="GO" id="GO:0090729">
    <property type="term" value="F:toxin activity"/>
    <property type="evidence" value="ECO:0007669"/>
    <property type="project" value="UniProtKB-KW"/>
</dbReference>
<dbReference type="GO" id="GO:0006952">
    <property type="term" value="P:defense response"/>
    <property type="evidence" value="ECO:0007669"/>
    <property type="project" value="InterPro"/>
</dbReference>
<dbReference type="CDD" id="cd23106">
    <property type="entry name" value="neurotoxins_LC_scorpion"/>
    <property type="match status" value="1"/>
</dbReference>
<dbReference type="FunFam" id="3.30.30.10:FF:000002">
    <property type="entry name" value="Alpha-like toxin BmK-M1"/>
    <property type="match status" value="1"/>
</dbReference>
<dbReference type="Gene3D" id="3.30.30.10">
    <property type="entry name" value="Knottin, scorpion toxin-like"/>
    <property type="match status" value="1"/>
</dbReference>
<dbReference type="InterPro" id="IPR044062">
    <property type="entry name" value="LCN-type_CS_alpha_beta_dom"/>
</dbReference>
<dbReference type="InterPro" id="IPR003614">
    <property type="entry name" value="Scorpion_toxin-like"/>
</dbReference>
<dbReference type="InterPro" id="IPR036574">
    <property type="entry name" value="Scorpion_toxin-like_sf"/>
</dbReference>
<dbReference type="InterPro" id="IPR018218">
    <property type="entry name" value="Scorpion_toxinL"/>
</dbReference>
<dbReference type="InterPro" id="IPR002061">
    <property type="entry name" value="Scorpion_toxinL/defensin"/>
</dbReference>
<dbReference type="Pfam" id="PF00537">
    <property type="entry name" value="Toxin_3"/>
    <property type="match status" value="1"/>
</dbReference>
<dbReference type="PRINTS" id="PR00285">
    <property type="entry name" value="SCORPNTOXIN"/>
</dbReference>
<dbReference type="SMART" id="SM00505">
    <property type="entry name" value="Knot1"/>
    <property type="match status" value="1"/>
</dbReference>
<dbReference type="SUPFAM" id="SSF57095">
    <property type="entry name" value="Scorpion toxin-like"/>
    <property type="match status" value="1"/>
</dbReference>
<dbReference type="PROSITE" id="PS51863">
    <property type="entry name" value="LCN_CSAB"/>
    <property type="match status" value="1"/>
</dbReference>
<comment type="function">
    <text evidence="1">Beta toxins bind voltage-independently at site-4 of sodium channels (Nav) and shift the voltage of activation toward more negative potentials thereby affecting sodium channel activation and promoting spontaneous and repetitive firing.</text>
</comment>
<comment type="subcellular location">
    <subcellularLocation>
        <location>Secreted</location>
    </subcellularLocation>
</comment>
<comment type="tissue specificity">
    <text>Expressed by the venom gland.</text>
</comment>
<comment type="domain">
    <text evidence="3">Has the structural arrangement of an alpha-helix connected to antiparallel beta-sheets by disulfide bonds (CS-alpha/beta).</text>
</comment>
<comment type="miscellaneous">
    <text evidence="1">Negative results: does not affect the cardiac Nav1.5/SCN5A, the peripheral nerve channel Nav1.7/SCN9A, and the voltage-dependent potassium channel Kv1.5/KCNA5.</text>
</comment>
<comment type="similarity">
    <text evidence="3">Belongs to the long (4 C-C) scorpion toxin superfamily. Sodium channel inhibitor family. Beta subfamily.</text>
</comment>